<keyword id="KW-0067">ATP-binding</keyword>
<keyword id="KW-0963">Cytoplasm</keyword>
<keyword id="KW-0460">Magnesium</keyword>
<keyword id="KW-0479">Metal-binding</keyword>
<keyword id="KW-0547">Nucleotide-binding</keyword>
<keyword id="KW-0554">One-carbon metabolism</keyword>
<keyword id="KW-0630">Potassium</keyword>
<keyword id="KW-1185">Reference proteome</keyword>
<keyword id="KW-0808">Transferase</keyword>
<organism>
    <name type="scientific">Streptococcus gordonii (strain Challis / ATCC 35105 / BCRC 15272 / CH1 / DL1 / V288)</name>
    <dbReference type="NCBI Taxonomy" id="467705"/>
    <lineage>
        <taxon>Bacteria</taxon>
        <taxon>Bacillati</taxon>
        <taxon>Bacillota</taxon>
        <taxon>Bacilli</taxon>
        <taxon>Lactobacillales</taxon>
        <taxon>Streptococcaceae</taxon>
        <taxon>Streptococcus</taxon>
    </lineage>
</organism>
<dbReference type="EC" id="2.5.1.6" evidence="1"/>
<dbReference type="EMBL" id="CP000725">
    <property type="protein sequence ID" value="ABV10429.1"/>
    <property type="molecule type" value="Genomic_DNA"/>
</dbReference>
<dbReference type="RefSeq" id="WP_012000405.1">
    <property type="nucleotide sequence ID" value="NC_009785.1"/>
</dbReference>
<dbReference type="SMR" id="A8AWW6"/>
<dbReference type="STRING" id="467705.SGO_0987"/>
<dbReference type="KEGG" id="sgo:SGO_0987"/>
<dbReference type="eggNOG" id="COG0192">
    <property type="taxonomic scope" value="Bacteria"/>
</dbReference>
<dbReference type="HOGENOM" id="CLU_041802_1_1_9"/>
<dbReference type="UniPathway" id="UPA00315">
    <property type="reaction ID" value="UER00080"/>
</dbReference>
<dbReference type="Proteomes" id="UP000001131">
    <property type="component" value="Chromosome"/>
</dbReference>
<dbReference type="GO" id="GO:0005737">
    <property type="term" value="C:cytoplasm"/>
    <property type="evidence" value="ECO:0007669"/>
    <property type="project" value="UniProtKB-SubCell"/>
</dbReference>
<dbReference type="GO" id="GO:0005524">
    <property type="term" value="F:ATP binding"/>
    <property type="evidence" value="ECO:0007669"/>
    <property type="project" value="UniProtKB-UniRule"/>
</dbReference>
<dbReference type="GO" id="GO:0000287">
    <property type="term" value="F:magnesium ion binding"/>
    <property type="evidence" value="ECO:0007669"/>
    <property type="project" value="UniProtKB-UniRule"/>
</dbReference>
<dbReference type="GO" id="GO:0004478">
    <property type="term" value="F:methionine adenosyltransferase activity"/>
    <property type="evidence" value="ECO:0007669"/>
    <property type="project" value="UniProtKB-UniRule"/>
</dbReference>
<dbReference type="GO" id="GO:0006730">
    <property type="term" value="P:one-carbon metabolic process"/>
    <property type="evidence" value="ECO:0007669"/>
    <property type="project" value="UniProtKB-KW"/>
</dbReference>
<dbReference type="GO" id="GO:0006556">
    <property type="term" value="P:S-adenosylmethionine biosynthetic process"/>
    <property type="evidence" value="ECO:0007669"/>
    <property type="project" value="UniProtKB-UniRule"/>
</dbReference>
<dbReference type="CDD" id="cd18079">
    <property type="entry name" value="S-AdoMet_synt"/>
    <property type="match status" value="1"/>
</dbReference>
<dbReference type="FunFam" id="3.30.300.10:FF:000003">
    <property type="entry name" value="S-adenosylmethionine synthase"/>
    <property type="match status" value="1"/>
</dbReference>
<dbReference type="Gene3D" id="3.30.300.10">
    <property type="match status" value="3"/>
</dbReference>
<dbReference type="HAMAP" id="MF_00086">
    <property type="entry name" value="S_AdoMet_synth1"/>
    <property type="match status" value="1"/>
</dbReference>
<dbReference type="InterPro" id="IPR022631">
    <property type="entry name" value="ADOMET_SYNTHASE_CS"/>
</dbReference>
<dbReference type="InterPro" id="IPR022630">
    <property type="entry name" value="S-AdoMet_synt_C"/>
</dbReference>
<dbReference type="InterPro" id="IPR022629">
    <property type="entry name" value="S-AdoMet_synt_central"/>
</dbReference>
<dbReference type="InterPro" id="IPR022628">
    <property type="entry name" value="S-AdoMet_synt_N"/>
</dbReference>
<dbReference type="InterPro" id="IPR002133">
    <property type="entry name" value="S-AdoMet_synthetase"/>
</dbReference>
<dbReference type="InterPro" id="IPR022636">
    <property type="entry name" value="S-AdoMet_synthetase_sfam"/>
</dbReference>
<dbReference type="NCBIfam" id="TIGR01034">
    <property type="entry name" value="metK"/>
    <property type="match status" value="1"/>
</dbReference>
<dbReference type="PANTHER" id="PTHR11964">
    <property type="entry name" value="S-ADENOSYLMETHIONINE SYNTHETASE"/>
    <property type="match status" value="1"/>
</dbReference>
<dbReference type="Pfam" id="PF02773">
    <property type="entry name" value="S-AdoMet_synt_C"/>
    <property type="match status" value="1"/>
</dbReference>
<dbReference type="Pfam" id="PF02772">
    <property type="entry name" value="S-AdoMet_synt_M"/>
    <property type="match status" value="1"/>
</dbReference>
<dbReference type="Pfam" id="PF00438">
    <property type="entry name" value="S-AdoMet_synt_N"/>
    <property type="match status" value="1"/>
</dbReference>
<dbReference type="PIRSF" id="PIRSF000497">
    <property type="entry name" value="MAT"/>
    <property type="match status" value="1"/>
</dbReference>
<dbReference type="SUPFAM" id="SSF55973">
    <property type="entry name" value="S-adenosylmethionine synthetase"/>
    <property type="match status" value="3"/>
</dbReference>
<dbReference type="PROSITE" id="PS00376">
    <property type="entry name" value="ADOMET_SYNTHASE_1"/>
    <property type="match status" value="1"/>
</dbReference>
<dbReference type="PROSITE" id="PS00377">
    <property type="entry name" value="ADOMET_SYNTHASE_2"/>
    <property type="match status" value="1"/>
</dbReference>
<proteinExistence type="inferred from homology"/>
<gene>
    <name evidence="1" type="primary">metK</name>
    <name type="ordered locus">SGO_0987</name>
</gene>
<sequence length="396" mass="43069">MSERKLFTSESVSEGHPDKIADQISDAILDAVLSQDPDAHVAAETAVYTGSVHVFGEISTTAYVDINRVVRDTIAEIGYTNTEYGFSAETVGVHPSLVEQSPDIAQGVNEALEVRGNADQDPLDLIGAGDQGLMFGFAVDETPELMPLPISLSHKLVRRLAELRKSGEISYLRPDAKSQVTVEYDENDHPVRVDTVVISTQHDPEATNEEIHRDVIEKVIKAVIPAQYLDDKTKFFINPTGRFVIGGPQGDSGLTGRKIIVDTYGGYARHGGGAFSGKDATKVDRSASYAARYIAKNIVAAGLAKKAEVQLAYAIGVAQPVSVRIDTFGTGIVAESKLQEAVRQIFDLRPAGIIQMLDLKRPIYRQTAAYGHMGRTDIDLPWEKTDKVQALKEHLA</sequence>
<reference key="1">
    <citation type="journal article" date="2007" name="J. Bacteriol.">
        <title>Genome-wide transcriptional changes in Streptococcus gordonii in response to competence signaling peptide.</title>
        <authorList>
            <person name="Vickerman M.M."/>
            <person name="Iobst S."/>
            <person name="Jesionowski A.M."/>
            <person name="Gill S.R."/>
        </authorList>
    </citation>
    <scope>NUCLEOTIDE SEQUENCE [LARGE SCALE GENOMIC DNA]</scope>
    <source>
        <strain>Challis / ATCC 35105 / BCRC 15272 / CH1 / DL1 / V288</strain>
    </source>
</reference>
<protein>
    <recommendedName>
        <fullName evidence="1">S-adenosylmethionine synthase</fullName>
        <shortName evidence="1">AdoMet synthase</shortName>
        <ecNumber evidence="1">2.5.1.6</ecNumber>
    </recommendedName>
    <alternativeName>
        <fullName evidence="1">MAT</fullName>
    </alternativeName>
    <alternativeName>
        <fullName evidence="1">Methionine adenosyltransferase</fullName>
    </alternativeName>
</protein>
<evidence type="ECO:0000255" key="1">
    <source>
        <dbReference type="HAMAP-Rule" id="MF_00086"/>
    </source>
</evidence>
<accession>A8AWW6</accession>
<name>METK_STRGC</name>
<comment type="function">
    <text evidence="1">Catalyzes the formation of S-adenosylmethionine (AdoMet) from methionine and ATP. The overall synthetic reaction is composed of two sequential steps, AdoMet formation and the subsequent tripolyphosphate hydrolysis which occurs prior to release of AdoMet from the enzyme.</text>
</comment>
<comment type="catalytic activity">
    <reaction evidence="1">
        <text>L-methionine + ATP + H2O = S-adenosyl-L-methionine + phosphate + diphosphate</text>
        <dbReference type="Rhea" id="RHEA:21080"/>
        <dbReference type="ChEBI" id="CHEBI:15377"/>
        <dbReference type="ChEBI" id="CHEBI:30616"/>
        <dbReference type="ChEBI" id="CHEBI:33019"/>
        <dbReference type="ChEBI" id="CHEBI:43474"/>
        <dbReference type="ChEBI" id="CHEBI:57844"/>
        <dbReference type="ChEBI" id="CHEBI:59789"/>
        <dbReference type="EC" id="2.5.1.6"/>
    </reaction>
</comment>
<comment type="cofactor">
    <cofactor evidence="1">
        <name>Mg(2+)</name>
        <dbReference type="ChEBI" id="CHEBI:18420"/>
    </cofactor>
    <text evidence="1">Binds 2 divalent ions per subunit.</text>
</comment>
<comment type="cofactor">
    <cofactor evidence="1">
        <name>K(+)</name>
        <dbReference type="ChEBI" id="CHEBI:29103"/>
    </cofactor>
    <text evidence="1">Binds 1 potassium ion per subunit.</text>
</comment>
<comment type="pathway">
    <text evidence="1">Amino-acid biosynthesis; S-adenosyl-L-methionine biosynthesis; S-adenosyl-L-methionine from L-methionine: step 1/1.</text>
</comment>
<comment type="subunit">
    <text evidence="1">Homotetramer; dimer of dimers.</text>
</comment>
<comment type="subcellular location">
    <subcellularLocation>
        <location evidence="1">Cytoplasm</location>
    </subcellularLocation>
</comment>
<comment type="similarity">
    <text evidence="1">Belongs to the AdoMet synthase family.</text>
</comment>
<feature type="chain" id="PRO_1000075399" description="S-adenosylmethionine synthase">
    <location>
        <begin position="1"/>
        <end position="396"/>
    </location>
</feature>
<feature type="region of interest" description="Flexible loop" evidence="1">
    <location>
        <begin position="100"/>
        <end position="110"/>
    </location>
</feature>
<feature type="binding site" description="in other chain" evidence="1">
    <location>
        <position position="16"/>
    </location>
    <ligand>
        <name>ATP</name>
        <dbReference type="ChEBI" id="CHEBI:30616"/>
        <note>ligand shared between two neighboring subunits</note>
    </ligand>
</feature>
<feature type="binding site" evidence="1">
    <location>
        <position position="18"/>
    </location>
    <ligand>
        <name>Mg(2+)</name>
        <dbReference type="ChEBI" id="CHEBI:18420"/>
    </ligand>
</feature>
<feature type="binding site" evidence="1">
    <location>
        <position position="44"/>
    </location>
    <ligand>
        <name>K(+)</name>
        <dbReference type="ChEBI" id="CHEBI:29103"/>
    </ligand>
</feature>
<feature type="binding site" description="in other chain" evidence="1">
    <location>
        <position position="57"/>
    </location>
    <ligand>
        <name>L-methionine</name>
        <dbReference type="ChEBI" id="CHEBI:57844"/>
        <note>ligand shared between two neighboring subunits</note>
    </ligand>
</feature>
<feature type="binding site" description="in other chain" evidence="1">
    <location>
        <position position="100"/>
    </location>
    <ligand>
        <name>L-methionine</name>
        <dbReference type="ChEBI" id="CHEBI:57844"/>
        <note>ligand shared between two neighboring subunits</note>
    </ligand>
</feature>
<feature type="binding site" description="in other chain" evidence="1">
    <location>
        <begin position="175"/>
        <end position="177"/>
    </location>
    <ligand>
        <name>ATP</name>
        <dbReference type="ChEBI" id="CHEBI:30616"/>
        <note>ligand shared between two neighboring subunits</note>
    </ligand>
</feature>
<feature type="binding site" description="in other chain" evidence="1">
    <location>
        <begin position="242"/>
        <end position="243"/>
    </location>
    <ligand>
        <name>ATP</name>
        <dbReference type="ChEBI" id="CHEBI:30616"/>
        <note>ligand shared between two neighboring subunits</note>
    </ligand>
</feature>
<feature type="binding site" evidence="1">
    <location>
        <position position="251"/>
    </location>
    <ligand>
        <name>ATP</name>
        <dbReference type="ChEBI" id="CHEBI:30616"/>
        <note>ligand shared between two neighboring subunits</note>
    </ligand>
</feature>
<feature type="binding site" evidence="1">
    <location>
        <position position="251"/>
    </location>
    <ligand>
        <name>L-methionine</name>
        <dbReference type="ChEBI" id="CHEBI:57844"/>
        <note>ligand shared between two neighboring subunits</note>
    </ligand>
</feature>
<feature type="binding site" description="in other chain" evidence="1">
    <location>
        <begin position="257"/>
        <end position="258"/>
    </location>
    <ligand>
        <name>ATP</name>
        <dbReference type="ChEBI" id="CHEBI:30616"/>
        <note>ligand shared between two neighboring subunits</note>
    </ligand>
</feature>
<feature type="binding site" evidence="1">
    <location>
        <position position="274"/>
    </location>
    <ligand>
        <name>ATP</name>
        <dbReference type="ChEBI" id="CHEBI:30616"/>
        <note>ligand shared between two neighboring subunits</note>
    </ligand>
</feature>
<feature type="binding site" evidence="1">
    <location>
        <position position="278"/>
    </location>
    <ligand>
        <name>ATP</name>
        <dbReference type="ChEBI" id="CHEBI:30616"/>
        <note>ligand shared between two neighboring subunits</note>
    </ligand>
</feature>
<feature type="binding site" description="in other chain" evidence="1">
    <location>
        <position position="282"/>
    </location>
    <ligand>
        <name>L-methionine</name>
        <dbReference type="ChEBI" id="CHEBI:57844"/>
        <note>ligand shared between two neighboring subunits</note>
    </ligand>
</feature>